<protein>
    <recommendedName>
        <fullName evidence="1">Sugar fermentation stimulation protein A</fullName>
    </recommendedName>
</protein>
<gene>
    <name evidence="1" type="primary">sfsA</name>
    <name type="ordered locus">SeSA_A0215</name>
</gene>
<sequence>MLFSPPLQRATLIQRYKRFLADVITPDGTTLTLHCPNTGAMTGCATPGDTVWYSTSENTKRKYPHTWELTETQSGAFICVNTLRANQLTKEAIQENRLPALAGYNILKSEVKYGAERSRIDFMLQADFRPDCYIEVKSVTLAEKENGYFPDAITERGQKHLRELMGVAAAGHRAVVVFAVLHSAITRFSPARHIDIKYAQLLSEAQNKGVEVLAYKAELSAQKMELNEPVPITL</sequence>
<organism>
    <name type="scientific">Salmonella schwarzengrund (strain CVM19633)</name>
    <dbReference type="NCBI Taxonomy" id="439843"/>
    <lineage>
        <taxon>Bacteria</taxon>
        <taxon>Pseudomonadati</taxon>
        <taxon>Pseudomonadota</taxon>
        <taxon>Gammaproteobacteria</taxon>
        <taxon>Enterobacterales</taxon>
        <taxon>Enterobacteriaceae</taxon>
        <taxon>Salmonella</taxon>
    </lineage>
</organism>
<reference key="1">
    <citation type="journal article" date="2011" name="J. Bacteriol.">
        <title>Comparative genomics of 28 Salmonella enterica isolates: evidence for CRISPR-mediated adaptive sublineage evolution.</title>
        <authorList>
            <person name="Fricke W.F."/>
            <person name="Mammel M.K."/>
            <person name="McDermott P.F."/>
            <person name="Tartera C."/>
            <person name="White D.G."/>
            <person name="Leclerc J.E."/>
            <person name="Ravel J."/>
            <person name="Cebula T.A."/>
        </authorList>
    </citation>
    <scope>NUCLEOTIDE SEQUENCE [LARGE SCALE GENOMIC DNA]</scope>
    <source>
        <strain>CVM19633</strain>
    </source>
</reference>
<dbReference type="EMBL" id="CP001127">
    <property type="protein sequence ID" value="ACF91049.1"/>
    <property type="molecule type" value="Genomic_DNA"/>
</dbReference>
<dbReference type="RefSeq" id="WP_000899412.1">
    <property type="nucleotide sequence ID" value="NC_011094.1"/>
</dbReference>
<dbReference type="SMR" id="B4TXP7"/>
<dbReference type="KEGG" id="sew:SeSA_A0215"/>
<dbReference type="HOGENOM" id="CLU_052299_2_0_6"/>
<dbReference type="Proteomes" id="UP000001865">
    <property type="component" value="Chromosome"/>
</dbReference>
<dbReference type="GO" id="GO:0003677">
    <property type="term" value="F:DNA binding"/>
    <property type="evidence" value="ECO:0007669"/>
    <property type="project" value="UniProtKB-KW"/>
</dbReference>
<dbReference type="CDD" id="cd22359">
    <property type="entry name" value="SfsA-like_bacterial"/>
    <property type="match status" value="1"/>
</dbReference>
<dbReference type="FunFam" id="2.40.50.580:FF:000001">
    <property type="entry name" value="Sugar fermentation stimulation protein A"/>
    <property type="match status" value="1"/>
</dbReference>
<dbReference type="FunFam" id="3.40.1350.60:FF:000001">
    <property type="entry name" value="Sugar fermentation stimulation protein A"/>
    <property type="match status" value="1"/>
</dbReference>
<dbReference type="Gene3D" id="2.40.50.580">
    <property type="match status" value="1"/>
</dbReference>
<dbReference type="Gene3D" id="3.40.1350.60">
    <property type="match status" value="1"/>
</dbReference>
<dbReference type="HAMAP" id="MF_00095">
    <property type="entry name" value="SfsA"/>
    <property type="match status" value="1"/>
</dbReference>
<dbReference type="InterPro" id="IPR005224">
    <property type="entry name" value="SfsA"/>
</dbReference>
<dbReference type="InterPro" id="IPR040452">
    <property type="entry name" value="SfsA_C"/>
</dbReference>
<dbReference type="InterPro" id="IPR041465">
    <property type="entry name" value="SfsA_N"/>
</dbReference>
<dbReference type="NCBIfam" id="TIGR00230">
    <property type="entry name" value="sfsA"/>
    <property type="match status" value="1"/>
</dbReference>
<dbReference type="PANTHER" id="PTHR30545">
    <property type="entry name" value="SUGAR FERMENTATION STIMULATION PROTEIN A"/>
    <property type="match status" value="1"/>
</dbReference>
<dbReference type="PANTHER" id="PTHR30545:SF2">
    <property type="entry name" value="SUGAR FERMENTATION STIMULATION PROTEIN A"/>
    <property type="match status" value="1"/>
</dbReference>
<dbReference type="Pfam" id="PF03749">
    <property type="entry name" value="SfsA"/>
    <property type="match status" value="1"/>
</dbReference>
<dbReference type="Pfam" id="PF17746">
    <property type="entry name" value="SfsA_N"/>
    <property type="match status" value="1"/>
</dbReference>
<evidence type="ECO:0000255" key="1">
    <source>
        <dbReference type="HAMAP-Rule" id="MF_00095"/>
    </source>
</evidence>
<comment type="function">
    <text evidence="1">Binds to DNA non-specifically. Could be a regulatory factor involved in maltose metabolism.</text>
</comment>
<comment type="similarity">
    <text evidence="1">Belongs to the SfsA family.</text>
</comment>
<proteinExistence type="inferred from homology"/>
<keyword id="KW-0238">DNA-binding</keyword>
<accession>B4TXP7</accession>
<feature type="chain" id="PRO_1000093592" description="Sugar fermentation stimulation protein A">
    <location>
        <begin position="1"/>
        <end position="234"/>
    </location>
</feature>
<feature type="DNA-binding region" description="H-T-H motif" evidence="1">
    <location>
        <begin position="201"/>
        <end position="220"/>
    </location>
</feature>
<name>SFSA_SALSV</name>